<dbReference type="EMBL" id="DQ885659">
    <property type="protein sequence ID" value="ABH12168.1"/>
    <property type="molecule type" value="mRNA"/>
</dbReference>
<dbReference type="SMR" id="Q0MQH5"/>
<dbReference type="GO" id="GO:0005743">
    <property type="term" value="C:mitochondrial inner membrane"/>
    <property type="evidence" value="ECO:0007669"/>
    <property type="project" value="UniProtKB-SubCell"/>
</dbReference>
<dbReference type="GO" id="GO:0045271">
    <property type="term" value="C:respiratory chain complex I"/>
    <property type="evidence" value="ECO:0000250"/>
    <property type="project" value="UniProtKB"/>
</dbReference>
<dbReference type="GO" id="GO:0006120">
    <property type="term" value="P:mitochondrial electron transport, NADH to ubiquinone"/>
    <property type="evidence" value="ECO:0007669"/>
    <property type="project" value="InterPro"/>
</dbReference>
<dbReference type="FunFam" id="2.60.260.40:FF:000002">
    <property type="entry name" value="NADH dehydrogenase [ubiquinone] iron-sulfur protein 6, mitochondrial"/>
    <property type="match status" value="1"/>
</dbReference>
<dbReference type="Gene3D" id="2.60.260.40">
    <property type="entry name" value="q5lls5 like domains"/>
    <property type="match status" value="1"/>
</dbReference>
<dbReference type="InterPro" id="IPR016668">
    <property type="entry name" value="NDUFS6"/>
</dbReference>
<dbReference type="InterPro" id="IPR019401">
    <property type="entry name" value="Znf_CHCC"/>
</dbReference>
<dbReference type="PANTHER" id="PTHR13156:SF0">
    <property type="entry name" value="NADH DEHYDROGENASE [UBIQUINONE] IRON-SULFUR PROTEIN 6, MITOCHONDRIAL"/>
    <property type="match status" value="1"/>
</dbReference>
<dbReference type="PANTHER" id="PTHR13156">
    <property type="entry name" value="NADH-UBIQUINONE OXIDOREDUCTASE 13 KD-A SUBUNIT"/>
    <property type="match status" value="1"/>
</dbReference>
<dbReference type="Pfam" id="PF10276">
    <property type="entry name" value="zf-CHCC"/>
    <property type="match status" value="1"/>
</dbReference>
<dbReference type="PIRSF" id="PIRSF016564">
    <property type="entry name" value="CI-13KD-A"/>
    <property type="match status" value="1"/>
</dbReference>
<keyword id="KW-0007">Acetylation</keyword>
<keyword id="KW-0249">Electron transport</keyword>
<keyword id="KW-0472">Membrane</keyword>
<keyword id="KW-0496">Mitochondrion</keyword>
<keyword id="KW-0999">Mitochondrion inner membrane</keyword>
<keyword id="KW-0679">Respiratory chain</keyword>
<keyword id="KW-0809">Transit peptide</keyword>
<keyword id="KW-0813">Transport</keyword>
<comment type="function">
    <text evidence="2">Accessory subunit of the mitochondrial membrane respiratory chain NADH dehydrogenase (Complex I), that is believed not to be involved in catalysis. Complex I functions in the transfer of electrons from NADH to the respiratory chain. The immediate electron acceptor for the enzyme is believed to be ubiquinone.</text>
</comment>
<comment type="subunit">
    <text evidence="2">Mammalian complex I is composed of 45 different subunits. This is a component of the iron-sulfur (IP) fragment of the enzyme.</text>
</comment>
<comment type="subcellular location">
    <subcellularLocation>
        <location evidence="2">Mitochondrion inner membrane</location>
        <topology evidence="2">Peripheral membrane protein</topology>
        <orientation evidence="2">Matrix side</orientation>
    </subcellularLocation>
</comment>
<comment type="similarity">
    <text evidence="4">Belongs to the complex I NDUFS6 subunit family.</text>
</comment>
<feature type="transit peptide" description="Mitochondrion" evidence="1">
    <location>
        <begin position="1"/>
        <end position="28"/>
    </location>
</feature>
<feature type="chain" id="PRO_0000251870" description="NADH dehydrogenase [ubiquinone] iron-sulfur protein 6, mitochondrial">
    <location>
        <begin position="29"/>
        <end position="124"/>
    </location>
</feature>
<feature type="modified residue" description="N6-acetyllysine" evidence="3">
    <location>
        <position position="98"/>
    </location>
</feature>
<name>NDUS6_PONPY</name>
<evidence type="ECO:0000250" key="1"/>
<evidence type="ECO:0000250" key="2">
    <source>
        <dbReference type="UniProtKB" id="O75380"/>
    </source>
</evidence>
<evidence type="ECO:0000250" key="3">
    <source>
        <dbReference type="UniProtKB" id="P52503"/>
    </source>
</evidence>
<evidence type="ECO:0000305" key="4"/>
<gene>
    <name type="primary">NDUFS6</name>
</gene>
<proteinExistence type="evidence at transcript level"/>
<protein>
    <recommendedName>
        <fullName>NADH dehydrogenase [ubiquinone] iron-sulfur protein 6, mitochondrial</fullName>
    </recommendedName>
    <alternativeName>
        <fullName>Complex I-13kD-A</fullName>
        <shortName>CI-13kD-A</shortName>
    </alternativeName>
    <alternativeName>
        <fullName>NADH-ubiquinone oxidoreductase 13 kDa-A subunit</fullName>
    </alternativeName>
</protein>
<sequence length="124" mass="13914">MAAAMTFYRLLNRWGEAARSLRLGARCFGVRVSPTGEKVTHTGQVYDDKDYRRIRFVGRQKEVNENFAIDLIAEQPVSEVETRVIACDGGGGALGHPKVYINLDKETKTGTCGYCGLQFRQHHH</sequence>
<accession>Q0MQH5</accession>
<reference key="1">
    <citation type="journal article" date="2006" name="Gene">
        <title>Adaptive selection of mitochondrial complex I subunits during primate radiation.</title>
        <authorList>
            <person name="Mishmar D."/>
            <person name="Ruiz-Pesini E."/>
            <person name="Mondragon-Palomino M."/>
            <person name="Procaccio V."/>
            <person name="Gaut B."/>
            <person name="Wallace D.C."/>
        </authorList>
    </citation>
    <scope>NUCLEOTIDE SEQUENCE [MRNA]</scope>
</reference>
<organism>
    <name type="scientific">Pongo pygmaeus</name>
    <name type="common">Bornean orangutan</name>
    <dbReference type="NCBI Taxonomy" id="9600"/>
    <lineage>
        <taxon>Eukaryota</taxon>
        <taxon>Metazoa</taxon>
        <taxon>Chordata</taxon>
        <taxon>Craniata</taxon>
        <taxon>Vertebrata</taxon>
        <taxon>Euteleostomi</taxon>
        <taxon>Mammalia</taxon>
        <taxon>Eutheria</taxon>
        <taxon>Euarchontoglires</taxon>
        <taxon>Primates</taxon>
        <taxon>Haplorrhini</taxon>
        <taxon>Catarrhini</taxon>
        <taxon>Hominidae</taxon>
        <taxon>Pongo</taxon>
    </lineage>
</organism>